<feature type="chain" id="PRO_0000150934" description="Cobalamin biosynthesis protein CobD">
    <location>
        <begin position="1"/>
        <end position="323"/>
    </location>
</feature>
<feature type="transmembrane region" description="Helical" evidence="1">
    <location>
        <begin position="5"/>
        <end position="25"/>
    </location>
</feature>
<feature type="transmembrane region" description="Helical" evidence="1">
    <location>
        <begin position="59"/>
        <end position="79"/>
    </location>
</feature>
<feature type="transmembrane region" description="Helical" evidence="1">
    <location>
        <begin position="82"/>
        <end position="102"/>
    </location>
</feature>
<feature type="transmembrane region" description="Helical" evidence="1">
    <location>
        <begin position="158"/>
        <end position="178"/>
    </location>
</feature>
<feature type="transmembrane region" description="Helical" evidence="1">
    <location>
        <begin position="210"/>
        <end position="230"/>
    </location>
</feature>
<feature type="transmembrane region" description="Helical" evidence="1">
    <location>
        <begin position="303"/>
        <end position="323"/>
    </location>
</feature>
<reference key="1">
    <citation type="journal article" date="1990" name="J. Bacteriol.">
        <title>Nucleotide sequence of a Pseudomonas denitrificans 5.4-kilobase DNA fragment containing five cob genes and identification of structural genes encoding S-adenosyl-L-methionine: uroporphyrinogen III methyltransferase and cobyrinic acid a,c-diamide synthase.</title>
        <authorList>
            <person name="Crouzet J."/>
            <person name="Cauchois L."/>
            <person name="Blanche F."/>
            <person name="Debussche L."/>
            <person name="Thibaut D."/>
            <person name="Rouyez M.-C."/>
            <person name="Rigault S."/>
            <person name="Mayaux J.-F."/>
            <person name="Cameron B."/>
        </authorList>
    </citation>
    <scope>NUCLEOTIDE SEQUENCE [GENOMIC DNA]</scope>
    <source>
        <strain>SC510</strain>
    </source>
</reference>
<comment type="function">
    <text>Converts cobyric acid to cobinamide by the addition of aminopropanol on the F carboxylic group.</text>
</comment>
<comment type="pathway">
    <text>Cofactor biosynthesis; adenosylcobalamin biosynthesis.</text>
</comment>
<comment type="subcellular location">
    <subcellularLocation>
        <location evidence="2">Cell membrane</location>
        <topology evidence="2">Multi-pass membrane protein</topology>
    </subcellularLocation>
</comment>
<comment type="similarity">
    <text evidence="2">Belongs to the CobD/CbiB family.</text>
</comment>
<comment type="caution">
    <text evidence="2">Was originally thought to originate from Pseudomonas denitrificans, but similarity searches show that the sequence is much closer to Sinorhizobium. The entry's taxonomy has been changed.</text>
</comment>
<accession>P21634</accession>
<organism>
    <name type="scientific">Sinorhizobium sp</name>
    <dbReference type="NCBI Taxonomy" id="42445"/>
    <lineage>
        <taxon>Bacteria</taxon>
        <taxon>Pseudomonadati</taxon>
        <taxon>Pseudomonadota</taxon>
        <taxon>Alphaproteobacteria</taxon>
        <taxon>Hyphomicrobiales</taxon>
        <taxon>Rhizobiaceae</taxon>
        <taxon>Sinorhizobium/Ensifer group</taxon>
        <taxon>Sinorhizobium</taxon>
    </lineage>
</organism>
<gene>
    <name type="primary">cobD</name>
</gene>
<proteinExistence type="inferred from homology"/>
<evidence type="ECO:0000255" key="1"/>
<evidence type="ECO:0000305" key="2"/>
<sequence length="323" mass="34197">MSETILLILALALVIDRVVGDPDWLWARVPHPVVFFGKAIGFFDARLNREDLEDSARKFRGVVAILLLLGISAWFGHLLHRLFAVLGPLGFLLEAVLVAVFLAQKSLADHVRRVAGGLRQGGLEGGRAAVSMIVGRDPKTLDEPAVCRAAIESLAENFSDGVVAPAFWYAVAGLPGLLAYKMLNTADSMIGHKSPKYLHFGWASARLDDLANLPAARLSILLISAGALIHRGASAAKDALTVALRDHGLHRSPNSGWPEAAMAGALDLQLAGPRIYGGVKVSEPMINGPGRAVATSEDIDAGIAVFYGACTVMAGFVLAIAMI</sequence>
<dbReference type="EMBL" id="M59236">
    <property type="protein sequence ID" value="AAA25776.1"/>
    <property type="molecule type" value="Genomic_DNA"/>
</dbReference>
<dbReference type="BioCyc" id="MetaCyc:MONOMER-142"/>
<dbReference type="UniPathway" id="UPA00148"/>
<dbReference type="GO" id="GO:0005886">
    <property type="term" value="C:plasma membrane"/>
    <property type="evidence" value="ECO:0007669"/>
    <property type="project" value="UniProtKB-SubCell"/>
</dbReference>
<dbReference type="GO" id="GO:0015420">
    <property type="term" value="F:ABC-type vitamin B12 transporter activity"/>
    <property type="evidence" value="ECO:0007669"/>
    <property type="project" value="UniProtKB-UniRule"/>
</dbReference>
<dbReference type="GO" id="GO:0048472">
    <property type="term" value="F:threonine-phosphate decarboxylase activity"/>
    <property type="evidence" value="ECO:0007669"/>
    <property type="project" value="InterPro"/>
</dbReference>
<dbReference type="GO" id="GO:0009236">
    <property type="term" value="P:cobalamin biosynthetic process"/>
    <property type="evidence" value="ECO:0007669"/>
    <property type="project" value="UniProtKB-UniRule"/>
</dbReference>
<dbReference type="GO" id="GO:0006779">
    <property type="term" value="P:porphyrin-containing compound biosynthetic process"/>
    <property type="evidence" value="ECO:0007669"/>
    <property type="project" value="UniProtKB-KW"/>
</dbReference>
<dbReference type="HAMAP" id="MF_00024">
    <property type="entry name" value="CobD_CbiB"/>
    <property type="match status" value="1"/>
</dbReference>
<dbReference type="InterPro" id="IPR004485">
    <property type="entry name" value="Cobalamin_biosynth_CobD/CbiB"/>
</dbReference>
<dbReference type="NCBIfam" id="TIGR00380">
    <property type="entry name" value="cobal_cbiB"/>
    <property type="match status" value="1"/>
</dbReference>
<dbReference type="PANTHER" id="PTHR34308">
    <property type="entry name" value="COBALAMIN BIOSYNTHESIS PROTEIN CBIB"/>
    <property type="match status" value="1"/>
</dbReference>
<dbReference type="PANTHER" id="PTHR34308:SF1">
    <property type="entry name" value="COBALAMIN BIOSYNTHESIS PROTEIN CBIB"/>
    <property type="match status" value="1"/>
</dbReference>
<dbReference type="Pfam" id="PF03186">
    <property type="entry name" value="CobD_Cbib"/>
    <property type="match status" value="1"/>
</dbReference>
<name>COBD_SINSX</name>
<keyword id="KW-1003">Cell membrane</keyword>
<keyword id="KW-0169">Cobalamin biosynthesis</keyword>
<keyword id="KW-0472">Membrane</keyword>
<keyword id="KW-0627">Porphyrin biosynthesis</keyword>
<keyword id="KW-0812">Transmembrane</keyword>
<keyword id="KW-1133">Transmembrane helix</keyword>
<protein>
    <recommendedName>
        <fullName>Cobalamin biosynthesis protein CobD</fullName>
    </recommendedName>
</protein>